<organism>
    <name type="scientific">Acanthamoeba polyphaga mimivirus</name>
    <name type="common">APMV</name>
    <dbReference type="NCBI Taxonomy" id="212035"/>
    <lineage>
        <taxon>Viruses</taxon>
        <taxon>Varidnaviria</taxon>
        <taxon>Bamfordvirae</taxon>
        <taxon>Nucleocytoviricota</taxon>
        <taxon>Megaviricetes</taxon>
        <taxon>Imitervirales</taxon>
        <taxon>Mimiviridae</taxon>
        <taxon>Megamimivirinae</taxon>
        <taxon>Mimivirus</taxon>
        <taxon>Mimivirus bradfordmassiliense</taxon>
    </lineage>
</organism>
<reference key="1">
    <citation type="journal article" date="2004" name="Science">
        <title>The 1.2-megabase genome sequence of Mimivirus.</title>
        <authorList>
            <person name="Raoult D."/>
            <person name="Audic S."/>
            <person name="Robert C."/>
            <person name="Abergel C."/>
            <person name="Renesto P."/>
            <person name="Ogata H."/>
            <person name="La Scola B."/>
            <person name="Susan M."/>
            <person name="Claverie J.-M."/>
        </authorList>
    </citation>
    <scope>NUCLEOTIDE SEQUENCE [LARGE SCALE GENOMIC DNA]</scope>
    <source>
        <strain>Rowbotham-Bradford</strain>
    </source>
</reference>
<proteinExistence type="predicted"/>
<protein>
    <recommendedName>
        <fullName>Uncharacterized protein L891</fullName>
    </recommendedName>
</protein>
<gene>
    <name type="ordered locus">MIMI_L891</name>
</gene>
<feature type="chain" id="PRO_0000071388" description="Uncharacterized protein L891">
    <location>
        <begin position="1"/>
        <end position="104"/>
    </location>
</feature>
<feature type="transmembrane region" description="Helical" evidence="1">
    <location>
        <begin position="26"/>
        <end position="46"/>
    </location>
</feature>
<feature type="transmembrane region" description="Helical" evidence="1">
    <location>
        <begin position="70"/>
        <end position="90"/>
    </location>
</feature>
<organismHost>
    <name type="scientific">Acanthamoeba polyphaga</name>
    <name type="common">Amoeba</name>
    <dbReference type="NCBI Taxonomy" id="5757"/>
</organismHost>
<accession>Q5UQX9</accession>
<comment type="subcellular location">
    <subcellularLocation>
        <location evidence="2">Membrane</location>
        <topology evidence="2">Multi-pass membrane protein</topology>
    </subcellularLocation>
</comment>
<name>YL891_MIMIV</name>
<dbReference type="EMBL" id="AY653733">
    <property type="protein sequence ID" value="AAV51148.1"/>
    <property type="molecule type" value="Genomic_DNA"/>
</dbReference>
<dbReference type="KEGG" id="vg:9925559"/>
<dbReference type="Proteomes" id="UP000001134">
    <property type="component" value="Genome"/>
</dbReference>
<dbReference type="GO" id="GO:0016020">
    <property type="term" value="C:membrane"/>
    <property type="evidence" value="ECO:0007669"/>
    <property type="project" value="UniProtKB-SubCell"/>
</dbReference>
<sequence>MSLFKGFMINLFLTPIPDSPMNLLTIGTGIIGVIGGILVVKGFTFFDKCYNKNSTNNSNSDECLPIFIGGLLGGIIGIATGFSITIIIAITLAIKSIINCVESQ</sequence>
<evidence type="ECO:0000255" key="1"/>
<evidence type="ECO:0000305" key="2"/>
<keyword id="KW-0472">Membrane</keyword>
<keyword id="KW-1185">Reference proteome</keyword>
<keyword id="KW-0812">Transmembrane</keyword>
<keyword id="KW-1133">Transmembrane helix</keyword>